<protein>
    <recommendedName>
        <fullName>Uncharacterized protein YGL006W-A</fullName>
    </recommendedName>
</protein>
<organism>
    <name type="scientific">Saccharomyces cerevisiae (strain ATCC 204508 / S288c)</name>
    <name type="common">Baker's yeast</name>
    <dbReference type="NCBI Taxonomy" id="559292"/>
    <lineage>
        <taxon>Eukaryota</taxon>
        <taxon>Fungi</taxon>
        <taxon>Dikarya</taxon>
        <taxon>Ascomycota</taxon>
        <taxon>Saccharomycotina</taxon>
        <taxon>Saccharomycetes</taxon>
        <taxon>Saccharomycetales</taxon>
        <taxon>Saccharomycetaceae</taxon>
        <taxon>Saccharomyces</taxon>
    </lineage>
</organism>
<reference key="1">
    <citation type="journal article" date="1997" name="Nature">
        <title>The nucleotide sequence of Saccharomyces cerevisiae chromosome VII.</title>
        <authorList>
            <person name="Tettelin H."/>
            <person name="Agostoni-Carbone M.L."/>
            <person name="Albermann K."/>
            <person name="Albers M."/>
            <person name="Arroyo J."/>
            <person name="Backes U."/>
            <person name="Barreiros T."/>
            <person name="Bertani I."/>
            <person name="Bjourson A.J."/>
            <person name="Brueckner M."/>
            <person name="Bruschi C.V."/>
            <person name="Carignani G."/>
            <person name="Castagnoli L."/>
            <person name="Cerdan E."/>
            <person name="Clemente M.L."/>
            <person name="Coblenz A."/>
            <person name="Coglievina M."/>
            <person name="Coissac E."/>
            <person name="Defoor E."/>
            <person name="Del Bino S."/>
            <person name="Delius H."/>
            <person name="Delneri D."/>
            <person name="de Wergifosse P."/>
            <person name="Dujon B."/>
            <person name="Durand P."/>
            <person name="Entian K.-D."/>
            <person name="Eraso P."/>
            <person name="Escribano V."/>
            <person name="Fabiani L."/>
            <person name="Fartmann B."/>
            <person name="Feroli F."/>
            <person name="Feuermann M."/>
            <person name="Frontali L."/>
            <person name="Garcia-Gonzalez M."/>
            <person name="Garcia-Saez M.I."/>
            <person name="Goffeau A."/>
            <person name="Guerreiro P."/>
            <person name="Hani J."/>
            <person name="Hansen M."/>
            <person name="Hebling U."/>
            <person name="Hernandez K."/>
            <person name="Heumann K."/>
            <person name="Hilger F."/>
            <person name="Hofmann B."/>
            <person name="Indge K.J."/>
            <person name="James C.M."/>
            <person name="Klima R."/>
            <person name="Koetter P."/>
            <person name="Kramer B."/>
            <person name="Kramer W."/>
            <person name="Lauquin G."/>
            <person name="Leuther H."/>
            <person name="Louis E.J."/>
            <person name="Maillier E."/>
            <person name="Marconi A."/>
            <person name="Martegani E."/>
            <person name="Mazon M.J."/>
            <person name="Mazzoni C."/>
            <person name="McReynolds A.D.K."/>
            <person name="Melchioretto P."/>
            <person name="Mewes H.-W."/>
            <person name="Minenkova O."/>
            <person name="Mueller-Auer S."/>
            <person name="Nawrocki A."/>
            <person name="Netter P."/>
            <person name="Neu R."/>
            <person name="Nombela C."/>
            <person name="Oliver S.G."/>
            <person name="Panzeri L."/>
            <person name="Paoluzi S."/>
            <person name="Plevani P."/>
            <person name="Portetelle D."/>
            <person name="Portillo F."/>
            <person name="Potier S."/>
            <person name="Purnelle B."/>
            <person name="Rieger M."/>
            <person name="Riles L."/>
            <person name="Rinaldi T."/>
            <person name="Robben J."/>
            <person name="Rodrigues-Pousada C."/>
            <person name="Rodriguez-Belmonte E."/>
            <person name="Rodriguez-Torres A.M."/>
            <person name="Rose M."/>
            <person name="Ruzzi M."/>
            <person name="Saliola M."/>
            <person name="Sanchez-Perez M."/>
            <person name="Schaefer B."/>
            <person name="Schaefer M."/>
            <person name="Scharfe M."/>
            <person name="Schmidheini T."/>
            <person name="Schreer A."/>
            <person name="Skala J."/>
            <person name="Souciet J.-L."/>
            <person name="Steensma H.Y."/>
            <person name="Talla E."/>
            <person name="Thierry A."/>
            <person name="Vandenbol M."/>
            <person name="van der Aart Q.J.M."/>
            <person name="Van Dyck L."/>
            <person name="Vanoni M."/>
            <person name="Verhasselt P."/>
            <person name="Voet M."/>
            <person name="Volckaert G."/>
            <person name="Wambutt R."/>
            <person name="Watson M.D."/>
            <person name="Weber N."/>
            <person name="Wedler E."/>
            <person name="Wedler H."/>
            <person name="Wipfli P."/>
            <person name="Wolf K."/>
            <person name="Wright L.F."/>
            <person name="Zaccaria P."/>
            <person name="Zimmermann M."/>
            <person name="Zollner A."/>
            <person name="Kleine K."/>
        </authorList>
    </citation>
    <scope>NUCLEOTIDE SEQUENCE [LARGE SCALE GENOMIC DNA]</scope>
    <source>
        <strain>ATCC 204508 / S288c</strain>
    </source>
</reference>
<reference key="2">
    <citation type="journal article" date="2014" name="G3 (Bethesda)">
        <title>The reference genome sequence of Saccharomyces cerevisiae: Then and now.</title>
        <authorList>
            <person name="Engel S.R."/>
            <person name="Dietrich F.S."/>
            <person name="Fisk D.G."/>
            <person name="Binkley G."/>
            <person name="Balakrishnan R."/>
            <person name="Costanzo M.C."/>
            <person name="Dwight S.S."/>
            <person name="Hitz B.C."/>
            <person name="Karra K."/>
            <person name="Nash R.S."/>
            <person name="Weng S."/>
            <person name="Wong E.D."/>
            <person name="Lloyd P."/>
            <person name="Skrzypek M.S."/>
            <person name="Miyasato S.R."/>
            <person name="Simison M."/>
            <person name="Cherry J.M."/>
        </authorList>
    </citation>
    <scope>GENOME REANNOTATION</scope>
    <source>
        <strain>ATCC 204508 / S288c</strain>
    </source>
</reference>
<proteinExistence type="predicted"/>
<feature type="chain" id="PRO_0000245381" description="Uncharacterized protein YGL006W-A">
    <location>
        <begin position="1"/>
        <end position="36"/>
    </location>
</feature>
<keyword id="KW-1185">Reference proteome</keyword>
<gene>
    <name type="ordered locus">YGL006W-A</name>
</gene>
<name>YG006_YEAST</name>
<accession>Q3E802</accession>
<accession>D6VUD1</accession>
<dbReference type="EMBL" id="Z72529">
    <property type="status" value="NOT_ANNOTATED_CDS"/>
    <property type="molecule type" value="Genomic_DNA"/>
</dbReference>
<dbReference type="EMBL" id="BK006941">
    <property type="protein sequence ID" value="DAA08092.1"/>
    <property type="molecule type" value="Genomic_DNA"/>
</dbReference>
<dbReference type="RefSeq" id="NP_878076.1">
    <property type="nucleotide sequence ID" value="NM_001184634.1"/>
</dbReference>
<dbReference type="BioGRID" id="36998">
    <property type="interactions" value="8"/>
</dbReference>
<dbReference type="FunCoup" id="Q3E802">
    <property type="interactions" value="24"/>
</dbReference>
<dbReference type="STRING" id="4932.YGL006W-A"/>
<dbReference type="PaxDb" id="4932-YGL006W-A"/>
<dbReference type="EnsemblFungi" id="YGL006W-A_mRNA">
    <property type="protein sequence ID" value="YGL006W-A"/>
    <property type="gene ID" value="YGL006W-A"/>
</dbReference>
<dbReference type="GeneID" id="1466456"/>
<dbReference type="KEGG" id="sce:YGL006W-A"/>
<dbReference type="AGR" id="SGD:S000028769"/>
<dbReference type="SGD" id="S000028769">
    <property type="gene designation" value="YGL006W-A"/>
</dbReference>
<dbReference type="VEuPathDB" id="FungiDB:YGL006W-A"/>
<dbReference type="HOGENOM" id="CLU_3408154_0_0_1"/>
<dbReference type="InParanoid" id="Q3E802"/>
<dbReference type="BioCyc" id="YEAST:G3O-31019-MONOMER"/>
<dbReference type="PRO" id="PR:Q3E802"/>
<dbReference type="Proteomes" id="UP000002311">
    <property type="component" value="Chromosome VII"/>
</dbReference>
<sequence length="36" mass="4209">MLIFIIHYHRHLALHLMGAFQKHSNSISPPPRKGFI</sequence>